<organism>
    <name type="scientific">Mus musculus</name>
    <name type="common">Mouse</name>
    <dbReference type="NCBI Taxonomy" id="10090"/>
    <lineage>
        <taxon>Eukaryota</taxon>
        <taxon>Metazoa</taxon>
        <taxon>Chordata</taxon>
        <taxon>Craniata</taxon>
        <taxon>Vertebrata</taxon>
        <taxon>Euteleostomi</taxon>
        <taxon>Mammalia</taxon>
        <taxon>Eutheria</taxon>
        <taxon>Euarchontoglires</taxon>
        <taxon>Glires</taxon>
        <taxon>Rodentia</taxon>
        <taxon>Myomorpha</taxon>
        <taxon>Muroidea</taxon>
        <taxon>Muridae</taxon>
        <taxon>Murinae</taxon>
        <taxon>Mus</taxon>
        <taxon>Mus</taxon>
    </lineage>
</organism>
<reference key="1">
    <citation type="journal article" date="2005" name="Science">
        <title>The transcriptional landscape of the mammalian genome.</title>
        <authorList>
            <person name="Carninci P."/>
            <person name="Kasukawa T."/>
            <person name="Katayama S."/>
            <person name="Gough J."/>
            <person name="Frith M.C."/>
            <person name="Maeda N."/>
            <person name="Oyama R."/>
            <person name="Ravasi T."/>
            <person name="Lenhard B."/>
            <person name="Wells C."/>
            <person name="Kodzius R."/>
            <person name="Shimokawa K."/>
            <person name="Bajic V.B."/>
            <person name="Brenner S.E."/>
            <person name="Batalov S."/>
            <person name="Forrest A.R."/>
            <person name="Zavolan M."/>
            <person name="Davis M.J."/>
            <person name="Wilming L.G."/>
            <person name="Aidinis V."/>
            <person name="Allen J.E."/>
            <person name="Ambesi-Impiombato A."/>
            <person name="Apweiler R."/>
            <person name="Aturaliya R.N."/>
            <person name="Bailey T.L."/>
            <person name="Bansal M."/>
            <person name="Baxter L."/>
            <person name="Beisel K.W."/>
            <person name="Bersano T."/>
            <person name="Bono H."/>
            <person name="Chalk A.M."/>
            <person name="Chiu K.P."/>
            <person name="Choudhary V."/>
            <person name="Christoffels A."/>
            <person name="Clutterbuck D.R."/>
            <person name="Crowe M.L."/>
            <person name="Dalla E."/>
            <person name="Dalrymple B.P."/>
            <person name="de Bono B."/>
            <person name="Della Gatta G."/>
            <person name="di Bernardo D."/>
            <person name="Down T."/>
            <person name="Engstrom P."/>
            <person name="Fagiolini M."/>
            <person name="Faulkner G."/>
            <person name="Fletcher C.F."/>
            <person name="Fukushima T."/>
            <person name="Furuno M."/>
            <person name="Futaki S."/>
            <person name="Gariboldi M."/>
            <person name="Georgii-Hemming P."/>
            <person name="Gingeras T.R."/>
            <person name="Gojobori T."/>
            <person name="Green R.E."/>
            <person name="Gustincich S."/>
            <person name="Harbers M."/>
            <person name="Hayashi Y."/>
            <person name="Hensch T.K."/>
            <person name="Hirokawa N."/>
            <person name="Hill D."/>
            <person name="Huminiecki L."/>
            <person name="Iacono M."/>
            <person name="Ikeo K."/>
            <person name="Iwama A."/>
            <person name="Ishikawa T."/>
            <person name="Jakt M."/>
            <person name="Kanapin A."/>
            <person name="Katoh M."/>
            <person name="Kawasawa Y."/>
            <person name="Kelso J."/>
            <person name="Kitamura H."/>
            <person name="Kitano H."/>
            <person name="Kollias G."/>
            <person name="Krishnan S.P."/>
            <person name="Kruger A."/>
            <person name="Kummerfeld S.K."/>
            <person name="Kurochkin I.V."/>
            <person name="Lareau L.F."/>
            <person name="Lazarevic D."/>
            <person name="Lipovich L."/>
            <person name="Liu J."/>
            <person name="Liuni S."/>
            <person name="McWilliam S."/>
            <person name="Madan Babu M."/>
            <person name="Madera M."/>
            <person name="Marchionni L."/>
            <person name="Matsuda H."/>
            <person name="Matsuzawa S."/>
            <person name="Miki H."/>
            <person name="Mignone F."/>
            <person name="Miyake S."/>
            <person name="Morris K."/>
            <person name="Mottagui-Tabar S."/>
            <person name="Mulder N."/>
            <person name="Nakano N."/>
            <person name="Nakauchi H."/>
            <person name="Ng P."/>
            <person name="Nilsson R."/>
            <person name="Nishiguchi S."/>
            <person name="Nishikawa S."/>
            <person name="Nori F."/>
            <person name="Ohara O."/>
            <person name="Okazaki Y."/>
            <person name="Orlando V."/>
            <person name="Pang K.C."/>
            <person name="Pavan W.J."/>
            <person name="Pavesi G."/>
            <person name="Pesole G."/>
            <person name="Petrovsky N."/>
            <person name="Piazza S."/>
            <person name="Reed J."/>
            <person name="Reid J.F."/>
            <person name="Ring B.Z."/>
            <person name="Ringwald M."/>
            <person name="Rost B."/>
            <person name="Ruan Y."/>
            <person name="Salzberg S.L."/>
            <person name="Sandelin A."/>
            <person name="Schneider C."/>
            <person name="Schoenbach C."/>
            <person name="Sekiguchi K."/>
            <person name="Semple C.A."/>
            <person name="Seno S."/>
            <person name="Sessa L."/>
            <person name="Sheng Y."/>
            <person name="Shibata Y."/>
            <person name="Shimada H."/>
            <person name="Shimada K."/>
            <person name="Silva D."/>
            <person name="Sinclair B."/>
            <person name="Sperling S."/>
            <person name="Stupka E."/>
            <person name="Sugiura K."/>
            <person name="Sultana R."/>
            <person name="Takenaka Y."/>
            <person name="Taki K."/>
            <person name="Tammoja K."/>
            <person name="Tan S.L."/>
            <person name="Tang S."/>
            <person name="Taylor M.S."/>
            <person name="Tegner J."/>
            <person name="Teichmann S.A."/>
            <person name="Ueda H.R."/>
            <person name="van Nimwegen E."/>
            <person name="Verardo R."/>
            <person name="Wei C.L."/>
            <person name="Yagi K."/>
            <person name="Yamanishi H."/>
            <person name="Zabarovsky E."/>
            <person name="Zhu S."/>
            <person name="Zimmer A."/>
            <person name="Hide W."/>
            <person name="Bult C."/>
            <person name="Grimmond S.M."/>
            <person name="Teasdale R.D."/>
            <person name="Liu E.T."/>
            <person name="Brusic V."/>
            <person name="Quackenbush J."/>
            <person name="Wahlestedt C."/>
            <person name="Mattick J.S."/>
            <person name="Hume D.A."/>
            <person name="Kai C."/>
            <person name="Sasaki D."/>
            <person name="Tomaru Y."/>
            <person name="Fukuda S."/>
            <person name="Kanamori-Katayama M."/>
            <person name="Suzuki M."/>
            <person name="Aoki J."/>
            <person name="Arakawa T."/>
            <person name="Iida J."/>
            <person name="Imamura K."/>
            <person name="Itoh M."/>
            <person name="Kato T."/>
            <person name="Kawaji H."/>
            <person name="Kawagashira N."/>
            <person name="Kawashima T."/>
            <person name="Kojima M."/>
            <person name="Kondo S."/>
            <person name="Konno H."/>
            <person name="Nakano K."/>
            <person name="Ninomiya N."/>
            <person name="Nishio T."/>
            <person name="Okada M."/>
            <person name="Plessy C."/>
            <person name="Shibata K."/>
            <person name="Shiraki T."/>
            <person name="Suzuki S."/>
            <person name="Tagami M."/>
            <person name="Waki K."/>
            <person name="Watahiki A."/>
            <person name="Okamura-Oho Y."/>
            <person name="Suzuki H."/>
            <person name="Kawai J."/>
            <person name="Hayashizaki Y."/>
        </authorList>
    </citation>
    <scope>NUCLEOTIDE SEQUENCE [LARGE SCALE MRNA]</scope>
    <source>
        <strain>C57BL/6J</strain>
        <tissue>Kidney</tissue>
    </source>
</reference>
<reference key="2">
    <citation type="journal article" date="2010" name="Cell">
        <title>A tissue-specific atlas of mouse protein phosphorylation and expression.</title>
        <authorList>
            <person name="Huttlin E.L."/>
            <person name="Jedrychowski M.P."/>
            <person name="Elias J.E."/>
            <person name="Goswami T."/>
            <person name="Rad R."/>
            <person name="Beausoleil S.A."/>
            <person name="Villen J."/>
            <person name="Haas W."/>
            <person name="Sowa M.E."/>
            <person name="Gygi S.P."/>
        </authorList>
    </citation>
    <scope>PHOSPHORYLATION [LARGE SCALE ANALYSIS] AT SER-585 AND THR-588</scope>
    <scope>IDENTIFICATION BY MASS SPECTROMETRY [LARGE SCALE ANALYSIS]</scope>
    <source>
        <tissue>Kidney</tissue>
    </source>
</reference>
<reference key="3">
    <citation type="journal article" date="2012" name="Diabetes">
        <title>Na(+)-D-glucose cotransporter SGLT1 is pivotal for intestinal glucose absorption and glucose-dependent incretin secretion.</title>
        <authorList>
            <person name="Gorboulev V."/>
            <person name="Schuermann A."/>
            <person name="Vallon V."/>
            <person name="Kipp H."/>
            <person name="Jaschke A."/>
            <person name="Klessen D."/>
            <person name="Friedrich A."/>
            <person name="Scherneck S."/>
            <person name="Rieg T."/>
            <person name="Cunard R."/>
            <person name="Veyhl-Wichmann M."/>
            <person name="Srinivasan A."/>
            <person name="Balen D."/>
            <person name="Breljak D."/>
            <person name="Rexhepaj R."/>
            <person name="Parker H.E."/>
            <person name="Gribble F.M."/>
            <person name="Reimann F."/>
            <person name="Lang F."/>
            <person name="Wiese S."/>
            <person name="Sabolic I."/>
            <person name="Sendtner M."/>
            <person name="Koepsell H."/>
        </authorList>
    </citation>
    <scope>FUNCTION</scope>
    <scope>TRANSPORTER ACTIVITY</scope>
    <scope>TISSUE SPECIFICITY</scope>
    <scope>SUBCELLULAR LOCATION</scope>
    <scope>DISRUPTION PHENOTYPE</scope>
</reference>
<reference key="4">
    <citation type="journal article" date="2017" name="Sci. Rep.">
        <title>Loss of Endometrial Sodium Glucose Cotransporter SGLT1 is Detrimental to Embryo Survival and Fetal Growth in Pregnancy.</title>
        <authorList>
            <person name="Salker M.S."/>
            <person name="Singh Y."/>
            <person name="Zeng N."/>
            <person name="Chen H."/>
            <person name="Zhang S."/>
            <person name="Umbach A.T."/>
            <person name="Fakhri H."/>
            <person name="Kohlhofer U."/>
            <person name="Quintanilla-Martinez L."/>
            <person name="Durairaj R.R.P."/>
            <person name="Barros F.S.V."/>
            <person name="Vrljicak P."/>
            <person name="Ott S."/>
            <person name="Brucker S.Y."/>
            <person name="Wallwiener D."/>
            <person name="Vrhovac Madunic I."/>
            <person name="Breljak D."/>
            <person name="Sabolic I."/>
            <person name="Koepsell H."/>
            <person name="Brosens J.J."/>
            <person name="Lang F."/>
        </authorList>
    </citation>
    <scope>FUNCTION</scope>
    <scope>TRANSPORTER ACTIVITY</scope>
    <scope>TISSUE SPECIFICITY</scope>
    <scope>SUBCELLULAR LOCATION</scope>
    <scope>DISRUPTION PHENOTYPE</scope>
</reference>
<protein>
    <recommendedName>
        <fullName evidence="3">Sodium/glucose cotransporter 1</fullName>
        <shortName>Na(+)/glucose cotransporter 1</shortName>
    </recommendedName>
    <alternativeName>
        <fullName>High affinity sodium-glucose cotransporter</fullName>
    </alternativeName>
    <alternativeName>
        <fullName>Solute carrier family 5 member 1</fullName>
    </alternativeName>
</protein>
<gene>
    <name type="primary">Slc5a1</name>
    <name type="synonym">Nagt</name>
    <name evidence="3" type="synonym">Sglt1</name>
</gene>
<accession>Q8C3K6</accession>
<sequence length="665" mass="73449">MDSSTLSPAVTATDAPIPSYERIRNAADISVIVIYFVVVMAVGLWAMFSTNRGTVGGFFLAGRSMVWWPIGASLFASNIGSGHFVGLAGTGAAAGIAMGGFEWNALVLVVVLGWIFVPIYIKAGVVTMPEYLRKRFGGKRIQIYLSVLSLLLYIFTKISADIFSGAIFINLALGLDIYLAIFILLAITALYTITGGLAAVIYTDTLQTAIMLVGSFILTGFAFNEVGGYEAFMDKYMKAIPTKVSNGNFTAKEECYTPRADSFHIFRDPITGDMPWPGLIFGLAILALWYWCTDQVIVQRCLSAKNMSHVKADCTLCGYLKLLPMFLMVMPGMISRILYTEKIACVLPEECQKYCGTPVGCTNIAYPTLVVELMPNGLRGLMLSVMMASLMSSLTSIFNSASTLFTMDIYTKIRKKASEKELMIAGRLFILVLIGISIAWVPIVQSAQSGQLFDYIQSITSYLGPPIAAVFLLAIFCKRVNEQGAFWGLILGFLIGISRMITEFAYGTGSCMEPSNCPKIICGVHYLYFAIILFVISVITILIISFLTKPIPDVHLYRWCWSLRNSKEERIDLDAGEEEDIPEDSKDTIEIDTEAPQKKKGCFRRAYDLFCGLDQDKGPKMTKEEEEAMKMKMTDTSEKPLWRTVVNINGIILLAVAVFCHAYFA</sequence>
<dbReference type="EMBL" id="AK085602">
    <property type="protein sequence ID" value="BAC39483.1"/>
    <property type="molecule type" value="mRNA"/>
</dbReference>
<dbReference type="CCDS" id="CCDS19199.1"/>
<dbReference type="RefSeq" id="NP_062784.3">
    <property type="nucleotide sequence ID" value="NM_019810.4"/>
</dbReference>
<dbReference type="SMR" id="Q8C3K6"/>
<dbReference type="FunCoup" id="Q8C3K6">
    <property type="interactions" value="78"/>
</dbReference>
<dbReference type="IntAct" id="Q8C3K6">
    <property type="interactions" value="1"/>
</dbReference>
<dbReference type="STRING" id="10090.ENSMUSP00000011178"/>
<dbReference type="DrugCentral" id="Q8C3K6"/>
<dbReference type="GuidetoPHARMACOLOGY" id="915"/>
<dbReference type="GlyCosmos" id="Q8C3K6">
    <property type="glycosylation" value="1 site, No reported glycans"/>
</dbReference>
<dbReference type="GlyGen" id="Q8C3K6">
    <property type="glycosylation" value="1 site, 1 N-linked glycan (1 site)"/>
</dbReference>
<dbReference type="iPTMnet" id="Q8C3K6"/>
<dbReference type="PhosphoSitePlus" id="Q8C3K6"/>
<dbReference type="jPOST" id="Q8C3K6"/>
<dbReference type="PaxDb" id="10090-ENSMUSP00000011178"/>
<dbReference type="PeptideAtlas" id="Q8C3K6"/>
<dbReference type="ProteomicsDB" id="255345"/>
<dbReference type="DNASU" id="20537"/>
<dbReference type="GeneID" id="20537"/>
<dbReference type="KEGG" id="mmu:20537"/>
<dbReference type="AGR" id="MGI:107678"/>
<dbReference type="CTD" id="6523"/>
<dbReference type="MGI" id="MGI:107678">
    <property type="gene designation" value="Slc5a1"/>
</dbReference>
<dbReference type="eggNOG" id="KOG2349">
    <property type="taxonomic scope" value="Eukaryota"/>
</dbReference>
<dbReference type="InParanoid" id="Q8C3K6"/>
<dbReference type="OrthoDB" id="6132759at2759"/>
<dbReference type="PhylomeDB" id="Q8C3K6"/>
<dbReference type="Reactome" id="R-MMU-189200">
    <property type="pathway name" value="Cellular hexose transport"/>
</dbReference>
<dbReference type="Reactome" id="R-MMU-8981373">
    <property type="pathway name" value="Intestinal hexose absorption"/>
</dbReference>
<dbReference type="BioGRID-ORCS" id="20537">
    <property type="hits" value="2 hits in 77 CRISPR screens"/>
</dbReference>
<dbReference type="ChiTaRS" id="Slc5a1">
    <property type="organism name" value="mouse"/>
</dbReference>
<dbReference type="PRO" id="PR:Q8C3K6"/>
<dbReference type="Proteomes" id="UP000000589">
    <property type="component" value="Unplaced"/>
</dbReference>
<dbReference type="RNAct" id="Q8C3K6">
    <property type="molecule type" value="protein"/>
</dbReference>
<dbReference type="GO" id="GO:0016324">
    <property type="term" value="C:apical plasma membrane"/>
    <property type="evidence" value="ECO:0000314"/>
    <property type="project" value="UniProtKB"/>
</dbReference>
<dbReference type="GO" id="GO:0005903">
    <property type="term" value="C:brush border"/>
    <property type="evidence" value="ECO:0000314"/>
    <property type="project" value="MGI"/>
</dbReference>
<dbReference type="GO" id="GO:0055056">
    <property type="term" value="F:D-glucose transmembrane transporter activity"/>
    <property type="evidence" value="ECO:0000315"/>
    <property type="project" value="MGI"/>
</dbReference>
<dbReference type="GO" id="GO:0005412">
    <property type="term" value="F:D-glucose:sodium symporter activity"/>
    <property type="evidence" value="ECO:0000314"/>
    <property type="project" value="UniProtKB"/>
</dbReference>
<dbReference type="GO" id="GO:0015371">
    <property type="term" value="F:galactose:sodium symporter activity"/>
    <property type="evidence" value="ECO:0000250"/>
    <property type="project" value="UniProtKB"/>
</dbReference>
<dbReference type="GO" id="GO:0005372">
    <property type="term" value="F:water transmembrane transporter activity"/>
    <property type="evidence" value="ECO:0000250"/>
    <property type="project" value="UniProtKB"/>
</dbReference>
<dbReference type="GO" id="GO:1904659">
    <property type="term" value="P:D-glucose transmembrane transport"/>
    <property type="evidence" value="ECO:0000315"/>
    <property type="project" value="MGI"/>
</dbReference>
<dbReference type="GO" id="GO:0050892">
    <property type="term" value="P:intestinal absorption"/>
    <property type="evidence" value="ECO:0000314"/>
    <property type="project" value="MGI"/>
</dbReference>
<dbReference type="GO" id="GO:0001951">
    <property type="term" value="P:intestinal D-glucose absorption"/>
    <property type="evidence" value="ECO:0000315"/>
    <property type="project" value="UniProtKB"/>
</dbReference>
<dbReference type="GO" id="GO:0001656">
    <property type="term" value="P:metanephros development"/>
    <property type="evidence" value="ECO:0000315"/>
    <property type="project" value="MGI"/>
</dbReference>
<dbReference type="GO" id="GO:0035623">
    <property type="term" value="P:renal D-glucose absorption"/>
    <property type="evidence" value="ECO:0000315"/>
    <property type="project" value="UniProtKB"/>
</dbReference>
<dbReference type="FunFam" id="1.20.1730.10:FF:000005">
    <property type="entry name" value="sodium/glucose cotransporter 1 isoform X1"/>
    <property type="match status" value="1"/>
</dbReference>
<dbReference type="Gene3D" id="1.20.1730.10">
    <property type="entry name" value="Sodium/glucose cotransporter"/>
    <property type="match status" value="1"/>
</dbReference>
<dbReference type="InterPro" id="IPR038377">
    <property type="entry name" value="Na/Glc_symporter_sf"/>
</dbReference>
<dbReference type="InterPro" id="IPR001734">
    <property type="entry name" value="Na/solute_symporter"/>
</dbReference>
<dbReference type="InterPro" id="IPR018212">
    <property type="entry name" value="Na/solute_symporter_CS"/>
</dbReference>
<dbReference type="NCBIfam" id="TIGR00813">
    <property type="entry name" value="sss"/>
    <property type="match status" value="1"/>
</dbReference>
<dbReference type="PANTHER" id="PTHR11819:SF151">
    <property type="entry name" value="SODIUM_GLUCOSE COTRANSPORTER 1"/>
    <property type="match status" value="1"/>
</dbReference>
<dbReference type="PANTHER" id="PTHR11819">
    <property type="entry name" value="SOLUTE CARRIER FAMILY 5"/>
    <property type="match status" value="1"/>
</dbReference>
<dbReference type="Pfam" id="PF00474">
    <property type="entry name" value="SSF"/>
    <property type="match status" value="1"/>
</dbReference>
<dbReference type="PROSITE" id="PS00456">
    <property type="entry name" value="NA_SOLUT_SYMP_1"/>
    <property type="match status" value="1"/>
</dbReference>
<dbReference type="PROSITE" id="PS00457">
    <property type="entry name" value="NA_SOLUT_SYMP_2"/>
    <property type="match status" value="1"/>
</dbReference>
<dbReference type="PROSITE" id="PS50283">
    <property type="entry name" value="NA_SOLUT_SYMP_3"/>
    <property type="match status" value="1"/>
</dbReference>
<name>SC5A1_MOUSE</name>
<evidence type="ECO:0000250" key="1"/>
<evidence type="ECO:0000250" key="2">
    <source>
        <dbReference type="UniProtKB" id="P11170"/>
    </source>
</evidence>
<evidence type="ECO:0000250" key="3">
    <source>
        <dbReference type="UniProtKB" id="P13866"/>
    </source>
</evidence>
<evidence type="ECO:0000255" key="4"/>
<evidence type="ECO:0000269" key="5">
    <source>
    </source>
</evidence>
<evidence type="ECO:0000269" key="6">
    <source>
    </source>
</evidence>
<evidence type="ECO:0000305" key="7"/>
<evidence type="ECO:0000305" key="8">
    <source>
    </source>
</evidence>
<evidence type="ECO:0000305" key="9">
    <source>
    </source>
</evidence>
<evidence type="ECO:0007744" key="10">
    <source>
    </source>
</evidence>
<proteinExistence type="evidence at protein level"/>
<feature type="chain" id="PRO_0000105367" description="Sodium/glucose cotransporter 1">
    <location>
        <begin position="1"/>
        <end position="665"/>
    </location>
</feature>
<feature type="topological domain" description="Extracellular" evidence="3">
    <location>
        <begin position="1"/>
        <end position="24"/>
    </location>
</feature>
<feature type="transmembrane region" description="Helical; Name=TM0" evidence="3">
    <location>
        <begin position="25"/>
        <end position="47"/>
    </location>
</feature>
<feature type="topological domain" description="Cytoplasmic" evidence="3">
    <location>
        <begin position="48"/>
        <end position="66"/>
    </location>
</feature>
<feature type="transmembrane region" description="Helical; Name=TM1" evidence="3">
    <location>
        <begin position="67"/>
        <end position="90"/>
    </location>
</feature>
<feature type="topological domain" description="Extracellular" evidence="3">
    <location>
        <begin position="91"/>
        <end position="95"/>
    </location>
</feature>
<feature type="transmembrane region" description="Helical; Name=TM2" evidence="3">
    <location>
        <begin position="96"/>
        <end position="117"/>
    </location>
</feature>
<feature type="topological domain" description="Cytoplasmic" evidence="3">
    <location>
        <begin position="118"/>
        <end position="139"/>
    </location>
</feature>
<feature type="transmembrane region" description="Helical; Name=TM3" evidence="3">
    <location>
        <begin position="140"/>
        <end position="169"/>
    </location>
</feature>
<feature type="topological domain" description="Extracellular" evidence="3">
    <location>
        <begin position="170"/>
        <end position="176"/>
    </location>
</feature>
<feature type="transmembrane region" description="Helical; Name=TM4" evidence="3">
    <location>
        <begin position="177"/>
        <end position="193"/>
    </location>
</feature>
<feature type="topological domain" description="Cytoplasmic" evidence="3">
    <location>
        <begin position="194"/>
        <end position="202"/>
    </location>
</feature>
<feature type="transmembrane region" description="Helical; Name=TM5" evidence="3">
    <location>
        <begin position="203"/>
        <end position="221"/>
    </location>
</feature>
<feature type="topological domain" description="Extracellular" evidence="3">
    <location>
        <begin position="222"/>
        <end position="275"/>
    </location>
</feature>
<feature type="transmembrane region" description="Helical; Name=TM6" evidence="3">
    <location>
        <begin position="276"/>
        <end position="295"/>
    </location>
</feature>
<feature type="topological domain" description="Cytoplasmic" evidence="3">
    <location>
        <begin position="296"/>
        <end position="309"/>
    </location>
</feature>
<feature type="transmembrane region" description="Helical; Name=TM7" evidence="3">
    <location>
        <begin position="310"/>
        <end position="331"/>
    </location>
</feature>
<feature type="topological domain" description="Extracellular" evidence="3">
    <location>
        <begin position="332"/>
        <end position="375"/>
    </location>
</feature>
<feature type="transmembrane region" description="Helical; Name=TM8" evidence="3">
    <location>
        <begin position="376"/>
        <end position="406"/>
    </location>
</feature>
<feature type="topological domain" description="Cytoplasmic" evidence="3">
    <location>
        <begin position="407"/>
        <end position="422"/>
    </location>
</feature>
<feature type="transmembrane region" description="Helical; Name=TM9" evidence="3">
    <location>
        <begin position="423"/>
        <end position="444"/>
    </location>
</feature>
<feature type="topological domain" description="Extracellular" evidence="3">
    <location>
        <begin position="445"/>
        <end position="451"/>
    </location>
</feature>
<feature type="transmembrane region" description="Helical; Name=TM10" evidence="3">
    <location>
        <begin position="452"/>
        <end position="477"/>
    </location>
</feature>
<feature type="topological domain" description="Cytoplasmic" evidence="3">
    <location>
        <begin position="478"/>
        <end position="481"/>
    </location>
</feature>
<feature type="transmembrane region" description="Helical; Name=TM11" evidence="3">
    <location>
        <begin position="482"/>
        <end position="504"/>
    </location>
</feature>
<feature type="topological domain" description="Extracellular" evidence="3">
    <location>
        <begin position="505"/>
        <end position="525"/>
    </location>
</feature>
<feature type="transmembrane region" description="Helical; Name=TM12" evidence="3">
    <location>
        <begin position="526"/>
        <end position="547"/>
    </location>
</feature>
<feature type="topological domain" description="Cytoplasmic" evidence="3">
    <location>
        <begin position="548"/>
        <end position="645"/>
    </location>
</feature>
<feature type="transmembrane region" description="Helical; Name=TM13" evidence="3">
    <location>
        <begin position="646"/>
        <end position="663"/>
    </location>
</feature>
<feature type="topological domain" description="Extracellular" evidence="3">
    <location>
        <begin position="664"/>
        <end position="665"/>
    </location>
</feature>
<feature type="binding site" evidence="1">
    <location>
        <position position="457"/>
    </location>
    <ligand>
        <name>D-glucose</name>
        <dbReference type="ChEBI" id="CHEBI:4167"/>
    </ligand>
</feature>
<feature type="site" description="Implicated in sodium coupling" evidence="1">
    <location>
        <position position="43"/>
    </location>
</feature>
<feature type="site" description="Implicated in sodium coupling" evidence="1">
    <location>
        <position position="300"/>
    </location>
</feature>
<feature type="site" description="Involved in sugar-binding/transport and inhibitor binding" evidence="1">
    <location>
        <position position="460"/>
    </location>
</feature>
<feature type="modified residue" description="Phosphoserine" evidence="10">
    <location>
        <position position="585"/>
    </location>
</feature>
<feature type="modified residue" description="Phosphothreonine" evidence="10">
    <location>
        <position position="588"/>
    </location>
</feature>
<feature type="glycosylation site" description="N-linked (GlcNAc...) asparagine" evidence="4">
    <location>
        <position position="248"/>
    </location>
</feature>
<feature type="disulfide bond" evidence="2">
    <location>
        <begin position="255"/>
        <end position="611"/>
    </location>
</feature>
<feature type="disulfide bond" evidence="3">
    <location>
        <begin position="255"/>
        <end position="511"/>
    </location>
</feature>
<feature type="disulfide bond" evidence="3">
    <location>
        <begin position="345"/>
        <end position="351"/>
    </location>
</feature>
<feature type="disulfide bond" evidence="3">
    <location>
        <begin position="355"/>
        <end position="361"/>
    </location>
</feature>
<feature type="disulfide bond" evidence="3">
    <location>
        <begin position="517"/>
        <end position="522"/>
    </location>
</feature>
<comment type="function">
    <text evidence="3 5 6">Electrogenic Na(+)-coupled sugar symporter that actively transports D-glucose or D-galactose at the plasma membrane, with a Na(+) to sugar coupling ratio of 2:1. Transporter activity is driven by a transmembrane Na(+) electrochemical gradient set by the Na(+)/K(+) pump (PubMed:22124465, PubMed:28974690). Has a primary role in the transport of dietary monosaccharides from enterocytes to blood. Responsible for the absorption of D-glucose or D-galactose across the apical brush-border membrane of enterocytes, whereas basolateral exit is provided by GLUT2. Additionally, functions as a D-glucose sensor in enteroendocrine cells, triggering the secretion of the incretins GCG and GIP that control food intake and energy homeostasis (PubMed:22124465). Together with SGLT2, functions in reabsorption of D-glucose from glomerular filtrate, playing a nonredundant role in the S3 segment of the proximal tubules (PubMed:22124465). Transports D-glucose into endometrial epithelial cells, controlling glycogen synthesis and nutritional support for the embryo as well as the decidual transformation of endometrium prior to conception (PubMed:28974690). Acts as a water channel enabling passive water transport in response to the osmotic gradient created upon sugar and Na(+) uptake. Has high water conductivity comparable to aquaporins and therefore is expected to play an important role in transepithelial water permeability, especially in the small intestine.</text>
</comment>
<comment type="catalytic activity">
    <reaction evidence="5 6">
        <text>D-glucose(out) + 2 Na(+)(out) = D-glucose(in) + 2 Na(+)(in)</text>
        <dbReference type="Rhea" id="RHEA:70495"/>
        <dbReference type="ChEBI" id="CHEBI:4167"/>
        <dbReference type="ChEBI" id="CHEBI:29101"/>
    </reaction>
    <physiologicalReaction direction="left-to-right" evidence="8 9">
        <dbReference type="Rhea" id="RHEA:70496"/>
    </physiologicalReaction>
</comment>
<comment type="catalytic activity">
    <reaction evidence="3">
        <text>D-galactose(out) + 2 Na(+)(out) = D-galactose(in) + 2 Na(+)(in)</text>
        <dbReference type="Rhea" id="RHEA:70499"/>
        <dbReference type="ChEBI" id="CHEBI:4139"/>
        <dbReference type="ChEBI" id="CHEBI:29101"/>
    </reaction>
    <physiologicalReaction direction="left-to-right" evidence="3">
        <dbReference type="Rhea" id="RHEA:70500"/>
    </physiologicalReaction>
</comment>
<comment type="activity regulation">
    <text evidence="3">Enhanced by the interaction with PDZK1IP1/MAP17; but unlike SLC5A2/SGLT2, PDZK1IP1 is not essential for SLC5A1 transporter activity (By similarity). Possibly modulated by cholesterol binding (By similarity).</text>
</comment>
<comment type="subcellular location">
    <subcellularLocation>
        <location evidence="5 6">Apical cell membrane</location>
        <topology evidence="3">Multi-pass membrane protein</topology>
    </subcellularLocation>
</comment>
<comment type="tissue specificity">
    <text evidence="5 6">Expressed in enterocytes and enteroendocrine cells of small intestine (at protein level) (PubMed:22124465). Expressed in S3 segments of renal proximal tubules (at protein level) (PubMed:22124465). Expressed in endometrial glandular and epithelial cells (at protein level) (PubMed:28974690).</text>
</comment>
<comment type="domain">
    <text evidence="3">The cholesterol-binding site is formed by transmembrane helices TM1, TM7 and TM13.</text>
</comment>
<comment type="PTM">
    <text evidence="3">N-glycosylation is not necessary for the cotransporter function.</text>
</comment>
<comment type="disruption phenotype">
    <text evidence="5 6">Mutant mice had significantly lower embryo implantation rate associated with lower litter size (PubMed:28974690). On a standard diet, they developed symptoms of the glucose and galactose malabsorption and died within 2 days after weaning, a phenotype reminiscent of GGM syndrome in humans (PubMed:22124465). Weaned mice survived and were fertile when maintained on a glucose and galactose free diet (PubMed:22124465).</text>
</comment>
<comment type="similarity">
    <text evidence="7">Belongs to the sodium:solute symporter (SSF) (TC 2.A.21) family.</text>
</comment>
<keyword id="KW-1003">Cell membrane</keyword>
<keyword id="KW-1015">Disulfide bond</keyword>
<keyword id="KW-0325">Glycoprotein</keyword>
<keyword id="KW-0406">Ion transport</keyword>
<keyword id="KW-0472">Membrane</keyword>
<keyword id="KW-0597">Phosphoprotein</keyword>
<keyword id="KW-1185">Reference proteome</keyword>
<keyword id="KW-0915">Sodium</keyword>
<keyword id="KW-0739">Sodium transport</keyword>
<keyword id="KW-0762">Sugar transport</keyword>
<keyword id="KW-0769">Symport</keyword>
<keyword id="KW-0812">Transmembrane</keyword>
<keyword id="KW-1133">Transmembrane helix</keyword>
<keyword id="KW-0813">Transport</keyword>